<sequence>MKEMEVRAFKDDIKKYKGKSVAVFVYEGDLKPLARLSKGTSNKAKRVAELENFKGKEGEILKVPTLGTSVDFVYIVGLGKKEKVGEDTYRRASANLVKRMRRDKVESTVVVIPRRGDVSKEITKAITEGAILGNYRFDKYKSKKEDEKFEIKEVLINRGDEEGIRLGKIFAEAQNYARNLVNEPGNVINPITLAEEAKKLAEEFGLECKVYDEKQIQEMGMMALYSVGKGSATPPRFIHLIYKPSGKPKEKIALVGKGLTFDSGGLNIKPGDYMRTMKMDKSGACAVLGIMRAIAQLKPDVEVHGLIGAAENMPDGNAYRPDDVIKAKNGKYIEIDNTDAEGRVTLADVLSYASELKPDKIIDMATLTGACMVALGEYTAGLFTNAPDFAEEIKKTAKRTGERVWELPMDDERLRKKIKNTVADVLNTGGRYGGAITAAMFLEEFVGEGIKWVHLDIAGPAWSKEEYGYYTKGGTGFGVRTCLEYIMKVSSNV</sequence>
<comment type="function">
    <text evidence="1">Presumably involved in the processing and regular turnover of intracellular proteins. Catalyzes the removal of unsubstituted N-terminal amino acids from various peptides (By similarity).</text>
</comment>
<comment type="catalytic activity">
    <reaction>
        <text>Release of an N-terminal amino acid, Xaa-|-Yaa-, in which Xaa is preferably Leu, but may be other amino acids including Pro although not Arg or Lys, and Yaa may be Pro. Amino acid amides and methyl esters are also readily hydrolyzed, but rates on arylamides are exceedingly low.</text>
        <dbReference type="EC" id="3.4.11.1"/>
    </reaction>
</comment>
<comment type="catalytic activity">
    <reaction>
        <text>Release of an N-terminal amino acid, preferentially leucine, but not glutamic or aspartic acids.</text>
        <dbReference type="EC" id="3.4.11.10"/>
    </reaction>
</comment>
<comment type="cofactor">
    <cofactor evidence="1">
        <name>Mn(2+)</name>
        <dbReference type="ChEBI" id="CHEBI:29035"/>
    </cofactor>
    <text evidence="1">Binds 2 manganese ions per subunit.</text>
</comment>
<comment type="subcellular location">
    <subcellularLocation>
        <location evidence="1">Cytoplasm</location>
    </subcellularLocation>
</comment>
<comment type="similarity">
    <text evidence="3">Belongs to the peptidase M17 family.</text>
</comment>
<evidence type="ECO:0000250" key="1"/>
<evidence type="ECO:0000255" key="2"/>
<evidence type="ECO:0000305" key="3"/>
<dbReference type="EC" id="3.4.11.1"/>
<dbReference type="EC" id="3.4.11.10"/>
<dbReference type="EMBL" id="AE000657">
    <property type="protein sequence ID" value="AAC07829.1"/>
    <property type="molecule type" value="Genomic_DNA"/>
</dbReference>
<dbReference type="PIR" id="H70479">
    <property type="entry name" value="H70479"/>
</dbReference>
<dbReference type="RefSeq" id="NP_214437.1">
    <property type="nucleotide sequence ID" value="NC_000918.1"/>
</dbReference>
<dbReference type="SMR" id="O67868"/>
<dbReference type="FunCoup" id="O67868">
    <property type="interactions" value="355"/>
</dbReference>
<dbReference type="STRING" id="224324.aq_2099"/>
<dbReference type="EnsemblBacteria" id="AAC07829">
    <property type="protein sequence ID" value="AAC07829"/>
    <property type="gene ID" value="aq_2099"/>
</dbReference>
<dbReference type="KEGG" id="aae:aq_2099"/>
<dbReference type="PATRIC" id="fig|224324.8.peg.1619"/>
<dbReference type="eggNOG" id="COG0260">
    <property type="taxonomic scope" value="Bacteria"/>
</dbReference>
<dbReference type="HOGENOM" id="CLU_013734_2_2_0"/>
<dbReference type="InParanoid" id="O67868"/>
<dbReference type="OrthoDB" id="9809354at2"/>
<dbReference type="Proteomes" id="UP000000798">
    <property type="component" value="Chromosome"/>
</dbReference>
<dbReference type="GO" id="GO:0005737">
    <property type="term" value="C:cytoplasm"/>
    <property type="evidence" value="ECO:0000318"/>
    <property type="project" value="GO_Central"/>
</dbReference>
<dbReference type="GO" id="GO:0030145">
    <property type="term" value="F:manganese ion binding"/>
    <property type="evidence" value="ECO:0007669"/>
    <property type="project" value="UniProtKB-UniRule"/>
</dbReference>
<dbReference type="GO" id="GO:0070006">
    <property type="term" value="F:metalloaminopeptidase activity"/>
    <property type="evidence" value="ECO:0007669"/>
    <property type="project" value="InterPro"/>
</dbReference>
<dbReference type="GO" id="GO:0008233">
    <property type="term" value="F:peptidase activity"/>
    <property type="evidence" value="ECO:0000318"/>
    <property type="project" value="GO_Central"/>
</dbReference>
<dbReference type="GO" id="GO:0006508">
    <property type="term" value="P:proteolysis"/>
    <property type="evidence" value="ECO:0000318"/>
    <property type="project" value="GO_Central"/>
</dbReference>
<dbReference type="CDD" id="cd00433">
    <property type="entry name" value="Peptidase_M17"/>
    <property type="match status" value="1"/>
</dbReference>
<dbReference type="Gene3D" id="3.40.220.10">
    <property type="entry name" value="Leucine Aminopeptidase, subunit E, domain 1"/>
    <property type="match status" value="1"/>
</dbReference>
<dbReference type="Gene3D" id="3.40.630.10">
    <property type="entry name" value="Zn peptidases"/>
    <property type="match status" value="1"/>
</dbReference>
<dbReference type="HAMAP" id="MF_00181">
    <property type="entry name" value="Cytosol_peptidase_M17"/>
    <property type="match status" value="1"/>
</dbReference>
<dbReference type="InterPro" id="IPR011356">
    <property type="entry name" value="Leucine_aapep/pepB"/>
</dbReference>
<dbReference type="InterPro" id="IPR043472">
    <property type="entry name" value="Macro_dom-like"/>
</dbReference>
<dbReference type="InterPro" id="IPR000819">
    <property type="entry name" value="Peptidase_M17_C"/>
</dbReference>
<dbReference type="InterPro" id="IPR023042">
    <property type="entry name" value="Peptidase_M17_leu_NH2_pept"/>
</dbReference>
<dbReference type="InterPro" id="IPR008283">
    <property type="entry name" value="Peptidase_M17_N"/>
</dbReference>
<dbReference type="NCBIfam" id="NF002073">
    <property type="entry name" value="PRK00913.1-2"/>
    <property type="match status" value="1"/>
</dbReference>
<dbReference type="NCBIfam" id="NF002074">
    <property type="entry name" value="PRK00913.1-4"/>
    <property type="match status" value="1"/>
</dbReference>
<dbReference type="NCBIfam" id="NF002076">
    <property type="entry name" value="PRK00913.2-3"/>
    <property type="match status" value="1"/>
</dbReference>
<dbReference type="NCBIfam" id="NF002081">
    <property type="entry name" value="PRK00913.3-3"/>
    <property type="match status" value="1"/>
</dbReference>
<dbReference type="NCBIfam" id="NF002083">
    <property type="entry name" value="PRK00913.3-5"/>
    <property type="match status" value="1"/>
</dbReference>
<dbReference type="PANTHER" id="PTHR11963:SF23">
    <property type="entry name" value="CYTOSOL AMINOPEPTIDASE"/>
    <property type="match status" value="1"/>
</dbReference>
<dbReference type="PANTHER" id="PTHR11963">
    <property type="entry name" value="LEUCINE AMINOPEPTIDASE-RELATED"/>
    <property type="match status" value="1"/>
</dbReference>
<dbReference type="Pfam" id="PF00883">
    <property type="entry name" value="Peptidase_M17"/>
    <property type="match status" value="1"/>
</dbReference>
<dbReference type="Pfam" id="PF02789">
    <property type="entry name" value="Peptidase_M17_N"/>
    <property type="match status" value="1"/>
</dbReference>
<dbReference type="PRINTS" id="PR00481">
    <property type="entry name" value="LAMNOPPTDASE"/>
</dbReference>
<dbReference type="SUPFAM" id="SSF52949">
    <property type="entry name" value="Macro domain-like"/>
    <property type="match status" value="1"/>
</dbReference>
<dbReference type="SUPFAM" id="SSF53187">
    <property type="entry name" value="Zn-dependent exopeptidases"/>
    <property type="match status" value="1"/>
</dbReference>
<dbReference type="PROSITE" id="PS00631">
    <property type="entry name" value="CYTOSOL_AP"/>
    <property type="match status" value="1"/>
</dbReference>
<protein>
    <recommendedName>
        <fullName>Probable cytosol aminopeptidase</fullName>
        <ecNumber>3.4.11.1</ecNumber>
    </recommendedName>
    <alternativeName>
        <fullName>Leucine aminopeptidase</fullName>
        <shortName>LAP</shortName>
        <ecNumber>3.4.11.10</ecNumber>
    </alternativeName>
    <alternativeName>
        <fullName>Leucyl aminopeptidase</fullName>
    </alternativeName>
</protein>
<proteinExistence type="inferred from homology"/>
<gene>
    <name type="primary">pepA</name>
    <name type="ordered locus">aq_2099</name>
</gene>
<reference key="1">
    <citation type="journal article" date="1998" name="Nature">
        <title>The complete genome of the hyperthermophilic bacterium Aquifex aeolicus.</title>
        <authorList>
            <person name="Deckert G."/>
            <person name="Warren P.V."/>
            <person name="Gaasterland T."/>
            <person name="Young W.G."/>
            <person name="Lenox A.L."/>
            <person name="Graham D.E."/>
            <person name="Overbeek R."/>
            <person name="Snead M.A."/>
            <person name="Keller M."/>
            <person name="Aujay M."/>
            <person name="Huber R."/>
            <person name="Feldman R.A."/>
            <person name="Short J.M."/>
            <person name="Olsen G.J."/>
            <person name="Swanson R.V."/>
        </authorList>
    </citation>
    <scope>NUCLEOTIDE SEQUENCE [LARGE SCALE GENOMIC DNA]</scope>
    <source>
        <strain>VF5</strain>
    </source>
</reference>
<keyword id="KW-0031">Aminopeptidase</keyword>
<keyword id="KW-0963">Cytoplasm</keyword>
<keyword id="KW-0378">Hydrolase</keyword>
<keyword id="KW-0464">Manganese</keyword>
<keyword id="KW-0479">Metal-binding</keyword>
<keyword id="KW-0645">Protease</keyword>
<keyword id="KW-1185">Reference proteome</keyword>
<organism>
    <name type="scientific">Aquifex aeolicus (strain VF5)</name>
    <dbReference type="NCBI Taxonomy" id="224324"/>
    <lineage>
        <taxon>Bacteria</taxon>
        <taxon>Pseudomonadati</taxon>
        <taxon>Aquificota</taxon>
        <taxon>Aquificia</taxon>
        <taxon>Aquificales</taxon>
        <taxon>Aquificaceae</taxon>
        <taxon>Aquifex</taxon>
    </lineage>
</organism>
<accession>O67868</accession>
<feature type="chain" id="PRO_0000165717" description="Probable cytosol aminopeptidase">
    <location>
        <begin position="1"/>
        <end position="493"/>
    </location>
</feature>
<feature type="active site" evidence="2">
    <location>
        <position position="269"/>
    </location>
</feature>
<feature type="active site" evidence="2">
    <location>
        <position position="343"/>
    </location>
</feature>
<feature type="binding site" evidence="1">
    <location>
        <position position="257"/>
    </location>
    <ligand>
        <name>Mn(2+)</name>
        <dbReference type="ChEBI" id="CHEBI:29035"/>
        <label>2</label>
    </ligand>
</feature>
<feature type="binding site" evidence="1">
    <location>
        <position position="262"/>
    </location>
    <ligand>
        <name>Mn(2+)</name>
        <dbReference type="ChEBI" id="CHEBI:29035"/>
        <label>1</label>
    </ligand>
</feature>
<feature type="binding site" evidence="1">
    <location>
        <position position="262"/>
    </location>
    <ligand>
        <name>Mn(2+)</name>
        <dbReference type="ChEBI" id="CHEBI:29035"/>
        <label>2</label>
    </ligand>
</feature>
<feature type="binding site" evidence="1">
    <location>
        <position position="280"/>
    </location>
    <ligand>
        <name>Mn(2+)</name>
        <dbReference type="ChEBI" id="CHEBI:29035"/>
        <label>2</label>
    </ligand>
</feature>
<feature type="binding site" evidence="1">
    <location>
        <position position="339"/>
    </location>
    <ligand>
        <name>Mn(2+)</name>
        <dbReference type="ChEBI" id="CHEBI:29035"/>
        <label>1</label>
    </ligand>
</feature>
<feature type="binding site" evidence="1">
    <location>
        <position position="341"/>
    </location>
    <ligand>
        <name>Mn(2+)</name>
        <dbReference type="ChEBI" id="CHEBI:29035"/>
        <label>1</label>
    </ligand>
</feature>
<feature type="binding site" evidence="1">
    <location>
        <position position="341"/>
    </location>
    <ligand>
        <name>Mn(2+)</name>
        <dbReference type="ChEBI" id="CHEBI:29035"/>
        <label>2</label>
    </ligand>
</feature>
<name>AMPA_AQUAE</name>